<evidence type="ECO:0000255" key="1">
    <source>
        <dbReference type="HAMAP-Rule" id="MF_00600"/>
    </source>
</evidence>
<proteinExistence type="inferred from homology"/>
<dbReference type="EC" id="5.6.1.7" evidence="1"/>
<dbReference type="EMBL" id="CP000767">
    <property type="protein sequence ID" value="EAU00075.2"/>
    <property type="molecule type" value="Genomic_DNA"/>
</dbReference>
<dbReference type="RefSeq" id="WP_009651280.1">
    <property type="nucleotide sequence ID" value="NC_009715.2"/>
</dbReference>
<dbReference type="SMR" id="A7GZ43"/>
<dbReference type="STRING" id="360105.CCV52592_0308"/>
<dbReference type="KEGG" id="ccv:CCV52592_0308"/>
<dbReference type="HOGENOM" id="CLU_016503_3_0_7"/>
<dbReference type="OrthoDB" id="9766614at2"/>
<dbReference type="Proteomes" id="UP000006380">
    <property type="component" value="Chromosome"/>
</dbReference>
<dbReference type="GO" id="GO:0005737">
    <property type="term" value="C:cytoplasm"/>
    <property type="evidence" value="ECO:0007669"/>
    <property type="project" value="UniProtKB-SubCell"/>
</dbReference>
<dbReference type="GO" id="GO:0005524">
    <property type="term" value="F:ATP binding"/>
    <property type="evidence" value="ECO:0007669"/>
    <property type="project" value="UniProtKB-UniRule"/>
</dbReference>
<dbReference type="GO" id="GO:0140662">
    <property type="term" value="F:ATP-dependent protein folding chaperone"/>
    <property type="evidence" value="ECO:0007669"/>
    <property type="project" value="InterPro"/>
</dbReference>
<dbReference type="GO" id="GO:0016853">
    <property type="term" value="F:isomerase activity"/>
    <property type="evidence" value="ECO:0007669"/>
    <property type="project" value="UniProtKB-KW"/>
</dbReference>
<dbReference type="GO" id="GO:0051082">
    <property type="term" value="F:unfolded protein binding"/>
    <property type="evidence" value="ECO:0007669"/>
    <property type="project" value="UniProtKB-UniRule"/>
</dbReference>
<dbReference type="GO" id="GO:0042026">
    <property type="term" value="P:protein refolding"/>
    <property type="evidence" value="ECO:0007669"/>
    <property type="project" value="UniProtKB-UniRule"/>
</dbReference>
<dbReference type="CDD" id="cd03344">
    <property type="entry name" value="GroEL"/>
    <property type="match status" value="1"/>
</dbReference>
<dbReference type="FunFam" id="3.50.7.10:FF:000001">
    <property type="entry name" value="60 kDa chaperonin"/>
    <property type="match status" value="1"/>
</dbReference>
<dbReference type="Gene3D" id="3.50.7.10">
    <property type="entry name" value="GroEL"/>
    <property type="match status" value="1"/>
</dbReference>
<dbReference type="Gene3D" id="1.10.560.10">
    <property type="entry name" value="GroEL-like equatorial domain"/>
    <property type="match status" value="1"/>
</dbReference>
<dbReference type="Gene3D" id="3.30.260.10">
    <property type="entry name" value="TCP-1-like chaperonin intermediate domain"/>
    <property type="match status" value="1"/>
</dbReference>
<dbReference type="HAMAP" id="MF_00600">
    <property type="entry name" value="CH60"/>
    <property type="match status" value="1"/>
</dbReference>
<dbReference type="InterPro" id="IPR018370">
    <property type="entry name" value="Chaperonin_Cpn60_CS"/>
</dbReference>
<dbReference type="InterPro" id="IPR001844">
    <property type="entry name" value="Cpn60/GroEL"/>
</dbReference>
<dbReference type="InterPro" id="IPR002423">
    <property type="entry name" value="Cpn60/GroEL/TCP-1"/>
</dbReference>
<dbReference type="InterPro" id="IPR027409">
    <property type="entry name" value="GroEL-like_apical_dom_sf"/>
</dbReference>
<dbReference type="InterPro" id="IPR027413">
    <property type="entry name" value="GROEL-like_equatorial_sf"/>
</dbReference>
<dbReference type="InterPro" id="IPR027410">
    <property type="entry name" value="TCP-1-like_intermed_sf"/>
</dbReference>
<dbReference type="NCBIfam" id="TIGR02348">
    <property type="entry name" value="GroEL"/>
    <property type="match status" value="1"/>
</dbReference>
<dbReference type="NCBIfam" id="NF000592">
    <property type="entry name" value="PRK00013.1"/>
    <property type="match status" value="1"/>
</dbReference>
<dbReference type="NCBIfam" id="NF009487">
    <property type="entry name" value="PRK12849.1"/>
    <property type="match status" value="1"/>
</dbReference>
<dbReference type="NCBIfam" id="NF009488">
    <property type="entry name" value="PRK12850.1"/>
    <property type="match status" value="1"/>
</dbReference>
<dbReference type="NCBIfam" id="NF009489">
    <property type="entry name" value="PRK12851.1"/>
    <property type="match status" value="1"/>
</dbReference>
<dbReference type="PANTHER" id="PTHR45633">
    <property type="entry name" value="60 KDA HEAT SHOCK PROTEIN, MITOCHONDRIAL"/>
    <property type="match status" value="1"/>
</dbReference>
<dbReference type="Pfam" id="PF00118">
    <property type="entry name" value="Cpn60_TCP1"/>
    <property type="match status" value="1"/>
</dbReference>
<dbReference type="PRINTS" id="PR00298">
    <property type="entry name" value="CHAPERONIN60"/>
</dbReference>
<dbReference type="SUPFAM" id="SSF52029">
    <property type="entry name" value="GroEL apical domain-like"/>
    <property type="match status" value="1"/>
</dbReference>
<dbReference type="SUPFAM" id="SSF48592">
    <property type="entry name" value="GroEL equatorial domain-like"/>
    <property type="match status" value="2"/>
</dbReference>
<dbReference type="PROSITE" id="PS00296">
    <property type="entry name" value="CHAPERONINS_CPN60"/>
    <property type="match status" value="1"/>
</dbReference>
<accession>A7GZ43</accession>
<reference key="1">
    <citation type="submission" date="2007-07" db="EMBL/GenBank/DDBJ databases">
        <title>Genome sequence of Campylobacter curvus 525.92 isolated from human feces.</title>
        <authorList>
            <person name="Fouts D.E."/>
            <person name="Mongodin E.F."/>
            <person name="Puiu D."/>
            <person name="Sebastian Y."/>
            <person name="Miller W.G."/>
            <person name="Mandrell R.E."/>
            <person name="Lastovica A.J."/>
            <person name="Nelson K.E."/>
        </authorList>
    </citation>
    <scope>NUCLEOTIDE SEQUENCE [LARGE SCALE GENOMIC DNA]</scope>
    <source>
        <strain>525.92</strain>
    </source>
</reference>
<organism>
    <name type="scientific">Campylobacter curvus (strain 525.92)</name>
    <dbReference type="NCBI Taxonomy" id="360105"/>
    <lineage>
        <taxon>Bacteria</taxon>
        <taxon>Pseudomonadati</taxon>
        <taxon>Campylobacterota</taxon>
        <taxon>Epsilonproteobacteria</taxon>
        <taxon>Campylobacterales</taxon>
        <taxon>Campylobacteraceae</taxon>
        <taxon>Campylobacter</taxon>
    </lineage>
</organism>
<keyword id="KW-0067">ATP-binding</keyword>
<keyword id="KW-0143">Chaperone</keyword>
<keyword id="KW-0963">Cytoplasm</keyword>
<keyword id="KW-0413">Isomerase</keyword>
<keyword id="KW-0547">Nucleotide-binding</keyword>
<keyword id="KW-1185">Reference proteome</keyword>
<feature type="chain" id="PRO_1000025763" description="Chaperonin GroEL">
    <location>
        <begin position="1"/>
        <end position="544"/>
    </location>
</feature>
<feature type="binding site" evidence="1">
    <location>
        <begin position="29"/>
        <end position="32"/>
    </location>
    <ligand>
        <name>ATP</name>
        <dbReference type="ChEBI" id="CHEBI:30616"/>
    </ligand>
</feature>
<feature type="binding site" evidence="1">
    <location>
        <position position="50"/>
    </location>
    <ligand>
        <name>ATP</name>
        <dbReference type="ChEBI" id="CHEBI:30616"/>
    </ligand>
</feature>
<feature type="binding site" evidence="1">
    <location>
        <begin position="86"/>
        <end position="90"/>
    </location>
    <ligand>
        <name>ATP</name>
        <dbReference type="ChEBI" id="CHEBI:30616"/>
    </ligand>
</feature>
<feature type="binding site" evidence="1">
    <location>
        <position position="414"/>
    </location>
    <ligand>
        <name>ATP</name>
        <dbReference type="ChEBI" id="CHEBI:30616"/>
    </ligand>
</feature>
<feature type="binding site" evidence="1">
    <location>
        <begin position="477"/>
        <end position="479"/>
    </location>
    <ligand>
        <name>ATP</name>
        <dbReference type="ChEBI" id="CHEBI:30616"/>
    </ligand>
</feature>
<feature type="binding site" evidence="1">
    <location>
        <position position="493"/>
    </location>
    <ligand>
        <name>ATP</name>
        <dbReference type="ChEBI" id="CHEBI:30616"/>
    </ligand>
</feature>
<protein>
    <recommendedName>
        <fullName evidence="1">Chaperonin GroEL</fullName>
        <ecNumber evidence="1">5.6.1.7</ecNumber>
    </recommendedName>
    <alternativeName>
        <fullName evidence="1">60 kDa chaperonin</fullName>
    </alternativeName>
    <alternativeName>
        <fullName evidence="1">Chaperonin-60</fullName>
        <shortName evidence="1">Cpn60</shortName>
    </alternativeName>
</protein>
<name>CH60_CAMC5</name>
<comment type="function">
    <text evidence="1">Together with its co-chaperonin GroES, plays an essential role in assisting protein folding. The GroEL-GroES system forms a nano-cage that allows encapsulation of the non-native substrate proteins and provides a physical environment optimized to promote and accelerate protein folding.</text>
</comment>
<comment type="catalytic activity">
    <reaction evidence="1">
        <text>ATP + H2O + a folded polypeptide = ADP + phosphate + an unfolded polypeptide.</text>
        <dbReference type="EC" id="5.6.1.7"/>
    </reaction>
</comment>
<comment type="subunit">
    <text evidence="1">Forms a cylinder of 14 subunits composed of two heptameric rings stacked back-to-back. Interacts with the co-chaperonin GroES.</text>
</comment>
<comment type="subcellular location">
    <subcellularLocation>
        <location evidence="1">Cytoplasm</location>
    </subcellularLocation>
</comment>
<comment type="similarity">
    <text evidence="1">Belongs to the chaperonin (HSP60) family.</text>
</comment>
<sequence>MAKEIFYSDDARNRLYEGVRKLNDAVKVTMGPRGRNVLIQKSFGAPSITKDGVSVAKEVELKDTIENMGASLVREVASKTNDQAGDGTTTATVLAHAIFKEGLRNVTAGANPIEVKRGMDKEVAALIDELKNIAKKVSGSKEIAQIATISANSDESIGKLIADAMEKVGKDGVITVEEAKSIEDELNVVEGMQFDRGYLSPYFITNAEKMQVELSNPFILLFDKKITNLKDLLPVLEQIQKTGKPLLIVAEDIEGEALATLVVNKLRGVLNISAVKAPGFGDRRKAMLEDIAILTGGEVISEELGRTLESATLEDLGQASSVVIDKDNTTIVNGAGEKSAIDARINQIKAQIAETTSDYDKEKLQERLAKLSGGVAVIKVGAATETEMKEKKDRVDDALSATRAAVEEGIVVGGGSALILASKRVKLDLSGDEAIGAEIVRRALRAPLRQIAENAGFDAGVVTNAVEVSSDVNYGFNAVSGEYVNMFEAGIIDPVKVERVALQNAVSVASLLLTTEATISELKEDKPMPAMPDMGGMGGMGGMM</sequence>
<gene>
    <name evidence="1" type="primary">groEL</name>
    <name evidence="1" type="synonym">groL</name>
    <name type="ordered locus">Ccur92_11810</name>
    <name type="ORF">CCV52592_0308</name>
</gene>